<reference key="1">
    <citation type="journal article" date="2007" name="Photosyn. Res.">
        <title>Complete nucleotide sequence of the freshwater unicellular cyanobacterium Synechococcus elongatus PCC 6301 chromosome: gene content and organization.</title>
        <authorList>
            <person name="Sugita C."/>
            <person name="Ogata K."/>
            <person name="Shikata M."/>
            <person name="Jikuya H."/>
            <person name="Takano J."/>
            <person name="Furumichi M."/>
            <person name="Kanehisa M."/>
            <person name="Omata T."/>
            <person name="Sugiura M."/>
            <person name="Sugita M."/>
        </authorList>
    </citation>
    <scope>NUCLEOTIDE SEQUENCE [LARGE SCALE GENOMIC DNA]</scope>
    <source>
        <strain>ATCC 27144 / PCC 6301 / SAUG 1402/1</strain>
    </source>
</reference>
<protein>
    <recommendedName>
        <fullName evidence="1">Ferrochelatase</fullName>
        <ecNumber evidence="1">4.98.1.1</ecNumber>
    </recommendedName>
    <alternativeName>
        <fullName evidence="1">Heme synthase</fullName>
    </alternativeName>
    <alternativeName>
        <fullName evidence="1">Protoheme ferro-lyase</fullName>
    </alternativeName>
</protein>
<accession>Q5N2B2</accession>
<feature type="chain" id="PRO_0000175216" description="Ferrochelatase">
    <location>
        <begin position="1"/>
        <end position="387"/>
    </location>
</feature>
<feature type="binding site" evidence="1">
    <location>
        <position position="196"/>
    </location>
    <ligand>
        <name>Fe cation</name>
        <dbReference type="ChEBI" id="CHEBI:24875"/>
    </ligand>
</feature>
<feature type="binding site" evidence="1">
    <location>
        <position position="277"/>
    </location>
    <ligand>
        <name>Fe cation</name>
        <dbReference type="ChEBI" id="CHEBI:24875"/>
    </ligand>
</feature>
<comment type="function">
    <text evidence="1">Catalyzes the ferrous insertion into protoporphyrin IX.</text>
</comment>
<comment type="catalytic activity">
    <reaction evidence="1">
        <text>heme b + 2 H(+) = protoporphyrin IX + Fe(2+)</text>
        <dbReference type="Rhea" id="RHEA:22584"/>
        <dbReference type="ChEBI" id="CHEBI:15378"/>
        <dbReference type="ChEBI" id="CHEBI:29033"/>
        <dbReference type="ChEBI" id="CHEBI:57306"/>
        <dbReference type="ChEBI" id="CHEBI:60344"/>
        <dbReference type="EC" id="4.98.1.1"/>
    </reaction>
</comment>
<comment type="pathway">
    <text evidence="1">Porphyrin-containing compound metabolism; protoheme biosynthesis; protoheme from protoporphyrin-IX: step 1/1.</text>
</comment>
<comment type="subcellular location">
    <subcellularLocation>
        <location evidence="1">Cytoplasm</location>
    </subcellularLocation>
</comment>
<comment type="similarity">
    <text evidence="1">Belongs to the ferrochelatase family.</text>
</comment>
<evidence type="ECO:0000255" key="1">
    <source>
        <dbReference type="HAMAP-Rule" id="MF_00323"/>
    </source>
</evidence>
<keyword id="KW-0963">Cytoplasm</keyword>
<keyword id="KW-0350">Heme biosynthesis</keyword>
<keyword id="KW-0408">Iron</keyword>
<keyword id="KW-0456">Lyase</keyword>
<keyword id="KW-0479">Metal-binding</keyword>
<keyword id="KW-0627">Porphyrin biosynthesis</keyword>
<name>HEMH_SYNP6</name>
<sequence length="387" mass="44294">MGRVGVLLLNLGGPERLEDVGPFLYNLFADPEIIRLPFPWLQKPLAWLISSLRTRKSQENYKQIGGGSPLRRITEEQATALRQSLSDRGQAAQVYIGMRYWHPFTEEAIAQIKADGIDRLVILPLYPQFSISTSGSSFRLLQRLRDRDPEFQKIDCSVVPSWYERSGYLQAMAELIAQELDKLEQPEQGHVFFSAHGVPVSYVEEAGDPYQREIEDCTRKIMETLGRSNPWTLAYQSRVGPVEWLQPYTEDALEELAERGVKDLVVVPISFVSEHIETLEEIDIEYREIAEEAGIERFLRVPALNTHPLFIQDLSDLVEQTLEQPRFRLEDVTLLPKKVKLYPQERWEWGITLNAEVWNGRIAMLGFLALLVELLTGRGPLHALGLL</sequence>
<dbReference type="EC" id="4.98.1.1" evidence="1"/>
<dbReference type="EMBL" id="AP008231">
    <property type="protein sequence ID" value="BAD79558.1"/>
    <property type="molecule type" value="Genomic_DNA"/>
</dbReference>
<dbReference type="RefSeq" id="WP_011243680.1">
    <property type="nucleotide sequence ID" value="NZ_CP085785.1"/>
</dbReference>
<dbReference type="SMR" id="Q5N2B2"/>
<dbReference type="GeneID" id="72428949"/>
<dbReference type="KEGG" id="syc:syc1368_c"/>
<dbReference type="eggNOG" id="COG0276">
    <property type="taxonomic scope" value="Bacteria"/>
</dbReference>
<dbReference type="UniPathway" id="UPA00252">
    <property type="reaction ID" value="UER00325"/>
</dbReference>
<dbReference type="Proteomes" id="UP000001175">
    <property type="component" value="Chromosome"/>
</dbReference>
<dbReference type="GO" id="GO:0005737">
    <property type="term" value="C:cytoplasm"/>
    <property type="evidence" value="ECO:0007669"/>
    <property type="project" value="UniProtKB-SubCell"/>
</dbReference>
<dbReference type="GO" id="GO:0004325">
    <property type="term" value="F:ferrochelatase activity"/>
    <property type="evidence" value="ECO:0007669"/>
    <property type="project" value="UniProtKB-UniRule"/>
</dbReference>
<dbReference type="GO" id="GO:0046872">
    <property type="term" value="F:metal ion binding"/>
    <property type="evidence" value="ECO:0007669"/>
    <property type="project" value="UniProtKB-KW"/>
</dbReference>
<dbReference type="GO" id="GO:0006783">
    <property type="term" value="P:heme biosynthetic process"/>
    <property type="evidence" value="ECO:0007669"/>
    <property type="project" value="UniProtKB-UniRule"/>
</dbReference>
<dbReference type="CDD" id="cd00419">
    <property type="entry name" value="Ferrochelatase_C"/>
    <property type="match status" value="1"/>
</dbReference>
<dbReference type="CDD" id="cd03411">
    <property type="entry name" value="Ferrochelatase_N"/>
    <property type="match status" value="1"/>
</dbReference>
<dbReference type="FunFam" id="3.40.50.1400:FF:000006">
    <property type="entry name" value="Ferrochelatase"/>
    <property type="match status" value="1"/>
</dbReference>
<dbReference type="Gene3D" id="3.40.50.1400">
    <property type="match status" value="2"/>
</dbReference>
<dbReference type="HAMAP" id="MF_00323">
    <property type="entry name" value="Ferrochelatase"/>
    <property type="match status" value="1"/>
</dbReference>
<dbReference type="InterPro" id="IPR001015">
    <property type="entry name" value="Ferrochelatase"/>
</dbReference>
<dbReference type="InterPro" id="IPR019772">
    <property type="entry name" value="Ferrochelatase_AS"/>
</dbReference>
<dbReference type="InterPro" id="IPR033644">
    <property type="entry name" value="Ferrochelatase_C"/>
</dbReference>
<dbReference type="InterPro" id="IPR033659">
    <property type="entry name" value="Ferrochelatase_N"/>
</dbReference>
<dbReference type="NCBIfam" id="TIGR00109">
    <property type="entry name" value="hemH"/>
    <property type="match status" value="1"/>
</dbReference>
<dbReference type="PANTHER" id="PTHR11108">
    <property type="entry name" value="FERROCHELATASE"/>
    <property type="match status" value="1"/>
</dbReference>
<dbReference type="PANTHER" id="PTHR11108:SF1">
    <property type="entry name" value="FERROCHELATASE, MITOCHONDRIAL"/>
    <property type="match status" value="1"/>
</dbReference>
<dbReference type="Pfam" id="PF00762">
    <property type="entry name" value="Ferrochelatase"/>
    <property type="match status" value="1"/>
</dbReference>
<dbReference type="SUPFAM" id="SSF53800">
    <property type="entry name" value="Chelatase"/>
    <property type="match status" value="1"/>
</dbReference>
<dbReference type="SUPFAM" id="SSF103511">
    <property type="entry name" value="Chlorophyll a-b binding protein"/>
    <property type="match status" value="1"/>
</dbReference>
<dbReference type="PROSITE" id="PS00534">
    <property type="entry name" value="FERROCHELATASE"/>
    <property type="match status" value="1"/>
</dbReference>
<gene>
    <name evidence="1" type="primary">hemH</name>
    <name type="ordered locus">syc1368_c</name>
</gene>
<organism>
    <name type="scientific">Synechococcus sp. (strain ATCC 27144 / PCC 6301 / SAUG 1402/1)</name>
    <name type="common">Anacystis nidulans</name>
    <dbReference type="NCBI Taxonomy" id="269084"/>
    <lineage>
        <taxon>Bacteria</taxon>
        <taxon>Bacillati</taxon>
        <taxon>Cyanobacteriota</taxon>
        <taxon>Cyanophyceae</taxon>
        <taxon>Synechococcales</taxon>
        <taxon>Synechococcaceae</taxon>
        <taxon>Synechococcus</taxon>
    </lineage>
</organism>
<proteinExistence type="inferred from homology"/>